<protein>
    <recommendedName>
        <fullName>Caspase-14</fullName>
        <shortName>CASP-14</shortName>
        <ecNumber>3.4.22.-</ecNumber>
    </recommendedName>
    <alternativeName>
        <fullName>Mini-ICE</fullName>
        <shortName>MICE</shortName>
    </alternativeName>
    <component>
        <recommendedName>
            <fullName>Caspase-14 subunit p17, mature form</fullName>
        </recommendedName>
    </component>
    <component>
        <recommendedName>
            <fullName>Caspase-14 subunit p10, mature form</fullName>
        </recommendedName>
    </component>
    <component>
        <recommendedName>
            <fullName>Caspase-14 subunit p20, intermediate form</fullName>
        </recommendedName>
    </component>
    <component>
        <recommendedName>
            <fullName>Caspase-14 subunit p8, intermediate form</fullName>
        </recommendedName>
    </component>
</protein>
<comment type="function">
    <text evidence="2 4 6 7 8 9">Non-apoptotic caspase which is involved in epidermal differentiation. Seems to play a role in keratinocyte differentiation and is required for cornification (PubMed:18156206). Regulates maturation of the epidermis by proteolytically processing filaggrin (PubMed:21654840). In vitro is equally active on the synthetic caspase substrates WEHD-ACF and IETD-AFC. Involved in processing of prosaposin in the epidermis (PubMed:24872419). May be involved in retinal pigment epithelium cell barrier function (By similarity).</text>
</comment>
<comment type="subunit">
    <text evidence="2">Heterodimer of a large and a small subunit, both processed from the precursor; the mature active form is a p17/p10 dimer and the intermediate form a p20/p8 dimer.</text>
</comment>
<comment type="subcellular location">
    <subcellularLocation>
        <location evidence="4">Cytoplasm</location>
    </subcellularLocation>
    <subcellularLocation>
        <location evidence="4">Nucleus</location>
    </subcellularLocation>
</comment>
<comment type="alternative products">
    <event type="alternative splicing"/>
    <isoform>
        <id>O89094-1</id>
        <name>1</name>
        <name>C14L</name>
        <sequence type="displayed"/>
    </isoform>
    <isoform>
        <id>O89094-2</id>
        <name>2</name>
        <name>C14S</name>
        <sequence type="described" ref="VSP_028925 VSP_028926"/>
    </isoform>
</comment>
<comment type="tissue specificity">
    <text evidence="3 4">Embryo, adult liver and less in adult brain and kidney. Expressed in differentiating keratinocytes of embryonic skin (at protein level). Expressed in keratinocytes of adult skin suprabasal layers (at protein level).</text>
</comment>
<comment type="developmental stage">
    <text evidence="5">Expressed at embryonic day 18 specifically in cornified epithelium in the suprabasal layers.</text>
</comment>
<comment type="PTM">
    <text evidence="2 12">Maturation by proteolytic processing appears to be a two-step process. The precursor is processed by KLK7 to yield the p20/p8 intermediate form which acts the precursor to yield the p17/p10 mature form (By similarity). Initially it was reported that cleavage by granzyme B, caspase-8 and -10 generates the two active subunits, however the physiological relevance has not been established (PubMed:9823333).</text>
</comment>
<comment type="disruption phenotype">
    <text evidence="6 8">Mice show a shiny and lichenified skin with an epidermis containing more alveolar keratohyalin F-granules and an altered profilaggrin processing. The skin is highly sensitive to the formation of cyclobutane pyrimidine dimers after UVB irradiation, leading to increased levels of UVB-induced apoptosis (PubMed:17515931). Mice accumulate incomplete filaggrin breakdown products within the epidermal stratum corneum (SC), leading to reduced levels of natural moisturizing factors (NMFs) and lower SC hydration (PubMed:21654840).</text>
</comment>
<comment type="similarity">
    <text evidence="11">Belongs to the peptidase C14A family.</text>
</comment>
<gene>
    <name type="primary">Casp14</name>
</gene>
<feature type="chain" id="PRO_0000432797" description="Caspase-14 subunit p20, intermediate form" evidence="2">
    <location>
        <begin position="1"/>
        <end position="193"/>
    </location>
</feature>
<feature type="propeptide" id="PRO_0000004655" evidence="11">
    <location>
        <begin position="1"/>
        <end status="unknown"/>
    </location>
</feature>
<feature type="chain" id="PRO_0000432798" description="Caspase-14 subunit p17, mature form" evidence="2">
    <location>
        <begin status="unknown"/>
        <end position="155"/>
    </location>
</feature>
<feature type="propeptide" id="PRO_0000432799" evidence="2">
    <location>
        <begin position="156"/>
        <end position="167"/>
    </location>
</feature>
<feature type="chain" id="PRO_0000004657" description="Caspase-14 subunit p10, mature form" evidence="2">
    <location>
        <begin position="168"/>
        <end position="257"/>
    </location>
</feature>
<feature type="chain" id="PRO_0000432800" description="Caspase-14 subunit p8, intermediate form" evidence="2">
    <location>
        <begin position="194"/>
        <end position="257"/>
    </location>
</feature>
<feature type="active site" evidence="1">
    <location>
        <position position="93"/>
    </location>
</feature>
<feature type="active site" evidence="1">
    <location>
        <position position="136"/>
    </location>
</feature>
<feature type="splice variant" id="VSP_028925" description="In isoform 2." evidence="11">
    <original>EHRDPGEELRGNEELGGDEEL</original>
    <variation>DHPTYGKHGGDAGRKTKESEP</variation>
    <location>
        <begin position="139"/>
        <end position="159"/>
    </location>
</feature>
<feature type="splice variant" id="VSP_028926" description="In isoform 2." evidence="11">
    <location>
        <begin position="160"/>
        <end position="257"/>
    </location>
</feature>
<feature type="mutagenesis site" description="Decrease in death-inducing activity." evidence="10">
    <original>C</original>
    <variation>A</variation>
    <location>
        <position position="136"/>
    </location>
</feature>
<dbReference type="EC" id="3.4.22.-"/>
<dbReference type="EMBL" id="AF092997">
    <property type="protein sequence ID" value="AAC63364.1"/>
    <property type="molecule type" value="mRNA"/>
</dbReference>
<dbReference type="EMBL" id="AJ007750">
    <property type="protein sequence ID" value="CAA07678.1"/>
    <property type="molecule type" value="mRNA"/>
</dbReference>
<dbReference type="CCDS" id="CCDS23969.1">
    <molecule id="O89094-1"/>
</dbReference>
<dbReference type="RefSeq" id="NP_033939.1">
    <molecule id="O89094-1"/>
    <property type="nucleotide sequence ID" value="NM_009809.5"/>
</dbReference>
<dbReference type="RefSeq" id="XP_006513223.1">
    <molecule id="O89094-2"/>
    <property type="nucleotide sequence ID" value="XM_006513160.4"/>
</dbReference>
<dbReference type="SMR" id="O89094"/>
<dbReference type="FunCoup" id="O89094">
    <property type="interactions" value="483"/>
</dbReference>
<dbReference type="STRING" id="10090.ENSMUSP00000005488"/>
<dbReference type="MEROPS" id="C14.018"/>
<dbReference type="CarbonylDB" id="O89094"/>
<dbReference type="PhosphoSitePlus" id="O89094"/>
<dbReference type="PaxDb" id="10090-ENSMUSP00000005488"/>
<dbReference type="ProteomicsDB" id="265537">
    <molecule id="O89094-1"/>
</dbReference>
<dbReference type="ProteomicsDB" id="265538">
    <molecule id="O89094-2"/>
</dbReference>
<dbReference type="Antibodypedia" id="4107">
    <property type="antibodies" value="483 antibodies from 45 providers"/>
</dbReference>
<dbReference type="DNASU" id="12365"/>
<dbReference type="Ensembl" id="ENSMUST00000005488.9">
    <molecule id="O89094-1"/>
    <property type="protein sequence ID" value="ENSMUSP00000005488.8"/>
    <property type="gene ID" value="ENSMUSG00000005355.10"/>
</dbReference>
<dbReference type="Ensembl" id="ENSMUST00000219237.2">
    <molecule id="O89094-1"/>
    <property type="protein sequence ID" value="ENSMUSP00000151657.2"/>
    <property type="gene ID" value="ENSMUSG00000005355.10"/>
</dbReference>
<dbReference type="GeneID" id="12365"/>
<dbReference type="KEGG" id="mmu:12365"/>
<dbReference type="UCSC" id="uc007fyd.2">
    <molecule id="O89094-1"/>
    <property type="organism name" value="mouse"/>
</dbReference>
<dbReference type="AGR" id="MGI:1335092"/>
<dbReference type="CTD" id="23581"/>
<dbReference type="MGI" id="MGI:1335092">
    <property type="gene designation" value="Casp14"/>
</dbReference>
<dbReference type="VEuPathDB" id="HostDB:ENSMUSG00000005355"/>
<dbReference type="eggNOG" id="KOG3573">
    <property type="taxonomic scope" value="Eukaryota"/>
</dbReference>
<dbReference type="GeneTree" id="ENSGT00940000162117"/>
<dbReference type="HOGENOM" id="CLU_036904_2_2_1"/>
<dbReference type="InParanoid" id="O89094"/>
<dbReference type="OMA" id="REDPVSC"/>
<dbReference type="OrthoDB" id="6044770at2759"/>
<dbReference type="PhylomeDB" id="O89094"/>
<dbReference type="TreeFam" id="TF102023"/>
<dbReference type="Reactome" id="R-MMU-6809371">
    <property type="pathway name" value="Formation of the cornified envelope"/>
</dbReference>
<dbReference type="BioGRID-ORCS" id="12365">
    <property type="hits" value="1 hit in 79 CRISPR screens"/>
</dbReference>
<dbReference type="PRO" id="PR:O89094"/>
<dbReference type="Proteomes" id="UP000000589">
    <property type="component" value="Chromosome 10"/>
</dbReference>
<dbReference type="RNAct" id="O89094">
    <property type="molecule type" value="protein"/>
</dbReference>
<dbReference type="Bgee" id="ENSMUSG00000005355">
    <property type="expression patterns" value="Expressed in lip and 23 other cell types or tissues"/>
</dbReference>
<dbReference type="ExpressionAtlas" id="O89094">
    <property type="expression patterns" value="baseline and differential"/>
</dbReference>
<dbReference type="GO" id="GO:0001533">
    <property type="term" value="C:cornified envelope"/>
    <property type="evidence" value="ECO:0000314"/>
    <property type="project" value="MGI"/>
</dbReference>
<dbReference type="GO" id="GO:0005829">
    <property type="term" value="C:cytosol"/>
    <property type="evidence" value="ECO:0007669"/>
    <property type="project" value="Ensembl"/>
</dbReference>
<dbReference type="GO" id="GO:0045095">
    <property type="term" value="C:keratin filament"/>
    <property type="evidence" value="ECO:0007669"/>
    <property type="project" value="Ensembl"/>
</dbReference>
<dbReference type="GO" id="GO:0005739">
    <property type="term" value="C:mitochondrion"/>
    <property type="evidence" value="ECO:0007669"/>
    <property type="project" value="Ensembl"/>
</dbReference>
<dbReference type="GO" id="GO:0005654">
    <property type="term" value="C:nucleoplasm"/>
    <property type="evidence" value="ECO:0007669"/>
    <property type="project" value="Ensembl"/>
</dbReference>
<dbReference type="GO" id="GO:0004197">
    <property type="term" value="F:cysteine-type endopeptidase activity"/>
    <property type="evidence" value="ECO:0007669"/>
    <property type="project" value="InterPro"/>
</dbReference>
<dbReference type="GO" id="GO:0008233">
    <property type="term" value="F:peptidase activity"/>
    <property type="evidence" value="ECO:0000304"/>
    <property type="project" value="MGI"/>
</dbReference>
<dbReference type="GO" id="GO:0030154">
    <property type="term" value="P:cell differentiation"/>
    <property type="evidence" value="ECO:0007669"/>
    <property type="project" value="UniProtKB-KW"/>
</dbReference>
<dbReference type="GO" id="GO:0006508">
    <property type="term" value="P:proteolysis"/>
    <property type="evidence" value="ECO:0007669"/>
    <property type="project" value="UniProtKB-KW"/>
</dbReference>
<dbReference type="CDD" id="cd00032">
    <property type="entry name" value="CASc"/>
    <property type="match status" value="1"/>
</dbReference>
<dbReference type="FunFam" id="3.40.50.1460:FF:000015">
    <property type="entry name" value="Caspase 14"/>
    <property type="match status" value="1"/>
</dbReference>
<dbReference type="Gene3D" id="3.40.50.1460">
    <property type="match status" value="1"/>
</dbReference>
<dbReference type="InterPro" id="IPR029030">
    <property type="entry name" value="Caspase-like_dom_sf"/>
</dbReference>
<dbReference type="InterPro" id="IPR033139">
    <property type="entry name" value="Caspase_cys_AS"/>
</dbReference>
<dbReference type="InterPro" id="IPR002398">
    <property type="entry name" value="Pept_C14"/>
</dbReference>
<dbReference type="InterPro" id="IPR011600">
    <property type="entry name" value="Pept_C14_caspase"/>
</dbReference>
<dbReference type="InterPro" id="IPR002138">
    <property type="entry name" value="Pept_C14_p10"/>
</dbReference>
<dbReference type="InterPro" id="IPR001309">
    <property type="entry name" value="Pept_C14_p20"/>
</dbReference>
<dbReference type="InterPro" id="IPR015917">
    <property type="entry name" value="Pept_C14A"/>
</dbReference>
<dbReference type="PANTHER" id="PTHR10454">
    <property type="entry name" value="CASPASE"/>
    <property type="match status" value="1"/>
</dbReference>
<dbReference type="PANTHER" id="PTHR10454:SF131">
    <property type="entry name" value="CASPASE-14"/>
    <property type="match status" value="1"/>
</dbReference>
<dbReference type="Pfam" id="PF00656">
    <property type="entry name" value="Peptidase_C14"/>
    <property type="match status" value="1"/>
</dbReference>
<dbReference type="PRINTS" id="PR00376">
    <property type="entry name" value="IL1BCENZYME"/>
</dbReference>
<dbReference type="SMART" id="SM00115">
    <property type="entry name" value="CASc"/>
    <property type="match status" value="1"/>
</dbReference>
<dbReference type="SUPFAM" id="SSF52129">
    <property type="entry name" value="Caspase-like"/>
    <property type="match status" value="1"/>
</dbReference>
<dbReference type="PROSITE" id="PS01122">
    <property type="entry name" value="CASPASE_CYS"/>
    <property type="match status" value="1"/>
</dbReference>
<dbReference type="PROSITE" id="PS50207">
    <property type="entry name" value="CASPASE_P10"/>
    <property type="match status" value="1"/>
</dbReference>
<dbReference type="PROSITE" id="PS50208">
    <property type="entry name" value="CASPASE_P20"/>
    <property type="match status" value="1"/>
</dbReference>
<accession>O89094</accession>
<proteinExistence type="evidence at protein level"/>
<organism>
    <name type="scientific">Mus musculus</name>
    <name type="common">Mouse</name>
    <dbReference type="NCBI Taxonomy" id="10090"/>
    <lineage>
        <taxon>Eukaryota</taxon>
        <taxon>Metazoa</taxon>
        <taxon>Chordata</taxon>
        <taxon>Craniata</taxon>
        <taxon>Vertebrata</taxon>
        <taxon>Euteleostomi</taxon>
        <taxon>Mammalia</taxon>
        <taxon>Eutheria</taxon>
        <taxon>Euarchontoglires</taxon>
        <taxon>Glires</taxon>
        <taxon>Rodentia</taxon>
        <taxon>Myomorpha</taxon>
        <taxon>Muroidea</taxon>
        <taxon>Muridae</taxon>
        <taxon>Murinae</taxon>
        <taxon>Mus</taxon>
        <taxon>Mus</taxon>
    </lineage>
</organism>
<reference key="1">
    <citation type="journal article" date="1998" name="Cancer Res.">
        <title>Identification and characterization of murine caspase-14, a new member of the caspase family.</title>
        <authorList>
            <person name="Ahmad M."/>
            <person name="Srinivasula S.M."/>
            <person name="Hegde R."/>
            <person name="Mukattash R."/>
            <person name="Fernandes-Alnemri T."/>
            <person name="Alnemri E.S."/>
        </authorList>
    </citation>
    <scope>NUCLEOTIDE SEQUENCE [MRNA] (ISOFORM 1)</scope>
    <scope>CHARACTERIZATION</scope>
    <source>
        <strain>C57BL/6J</strain>
    </source>
</reference>
<reference key="2">
    <citation type="journal article" date="1998" name="Cell Death Differ.">
        <title>Identification of a new caspase homologue: caspase-14.</title>
        <authorList>
            <person name="Van de Craen M."/>
            <person name="Van Loo G."/>
            <person name="Pype S."/>
            <person name="Van Criekinge W."/>
            <person name="Van den brande I."/>
            <person name="Molemans F."/>
            <person name="Fiers W."/>
            <person name="Declercq W."/>
            <person name="Vandenabeele P."/>
        </authorList>
    </citation>
    <scope>NUCLEOTIDE SEQUENCE [MRNA] (ISOFORM 1)</scope>
    <scope>TISSUE SPECIFICITY</scope>
    <source>
        <strain>C57BL/6J</strain>
        <tissue>Embryo</tissue>
    </source>
</reference>
<reference key="3">
    <citation type="journal article" date="1998" name="J. Biol. Chem.">
        <title>Caspase-14 is a novel developmentally regulated protease.</title>
        <authorList>
            <person name="Hu S."/>
            <person name="Snipas S.J."/>
            <person name="Vincenz C."/>
            <person name="Salvesen G."/>
            <person name="Dixit V.M."/>
        </authorList>
    </citation>
    <scope>CHARACTERIZATION</scope>
    <scope>MUTAGENESIS OF CYS-136</scope>
</reference>
<reference key="4">
    <citation type="journal article" date="2000" name="Cell Death Differ.">
        <title>Epidermal differentiation does not involve the pro-apoptotic executioner caspases, but is associated with caspase-14 induction and processing.</title>
        <authorList>
            <person name="Lippens S."/>
            <person name="Kockx M."/>
            <person name="Knaapen M."/>
            <person name="Mortier L."/>
            <person name="Polakowska R."/>
            <person name="Verheyen A."/>
            <person name="Garmyn M."/>
            <person name="Zwijsen A."/>
            <person name="Formstecher P."/>
            <person name="Huylebroeck D."/>
            <person name="Vandenabeele P."/>
            <person name="Declercq W."/>
        </authorList>
    </citation>
    <scope>FUNCTION</scope>
    <scope>SUBCELLULAR LOCATION</scope>
    <scope>TISSUE SPECIFICITY</scope>
</reference>
<reference key="5">
    <citation type="journal article" date="2001" name="Cell Death Differ.">
        <title>Caspase-14, a keratinocyte specific caspase: mRNA splice variants and expression pattern in embryonic and adult mouse.</title>
        <authorList>
            <person name="Kuechle M.K."/>
            <person name="Predd H.M."/>
            <person name="Fleckman P."/>
            <person name="Dale B.A."/>
            <person name="Presland R.B."/>
        </authorList>
    </citation>
    <scope>ALTERNATIVE SPLICING (ISOFORM 2)</scope>
    <scope>DEVELOPMENTAL STAGE</scope>
</reference>
<reference key="6">
    <citation type="journal article" date="2007" name="Nat. Cell Biol.">
        <title>Caspase-14 protects against epidermal UVB photodamage and water loss.</title>
        <authorList>
            <person name="Denecker G."/>
            <person name="Hoste E."/>
            <person name="Gilbert B."/>
            <person name="Hochepied T."/>
            <person name="Ovaere P."/>
            <person name="Lippens S."/>
            <person name="Van den Broecke C."/>
            <person name="Van Damme P."/>
            <person name="D'Herde K."/>
            <person name="Hachem J.P."/>
            <person name="Borgonie G."/>
            <person name="Presland R.B."/>
            <person name="Schoonjans L."/>
            <person name="Libert C."/>
            <person name="Vandekerckhove J."/>
            <person name="Gevaert K."/>
            <person name="Vandenabeele P."/>
            <person name="Declercq W."/>
        </authorList>
    </citation>
    <scope>FUNCTION</scope>
    <scope>DISRUPTION PHENOTYPE</scope>
</reference>
<reference key="7">
    <citation type="journal article" date="2008" name="Am. J. Pathol.">
        <title>Acute modulations in permeability barrier function regulate epidermal cornification: role of caspase-14 and the protease-activated receptor type 2.</title>
        <authorList>
            <person name="Demerjian M."/>
            <person name="Hachem J.P."/>
            <person name="Tschachler E."/>
            <person name="Denecker G."/>
            <person name="Declercq W."/>
            <person name="Vandenabeele P."/>
            <person name="Mauro T."/>
            <person name="Hupe M."/>
            <person name="Crumrine D."/>
            <person name="Roelandt T."/>
            <person name="Houben E."/>
            <person name="Elias P.M."/>
            <person name="Feingold K.R."/>
        </authorList>
    </citation>
    <scope>FUNCTION</scope>
</reference>
<reference key="8">
    <citation type="journal article" date="2011" name="J. Invest. Dermatol.">
        <title>Caspase-14 is required for filaggrin degradation to natural moisturizing factors in the skin.</title>
        <authorList>
            <person name="Hoste E."/>
            <person name="Kemperman P."/>
            <person name="Devos M."/>
            <person name="Denecker G."/>
            <person name="Kezic S."/>
            <person name="Yau N."/>
            <person name="Gilbert B."/>
            <person name="Lippens S."/>
            <person name="De Groote P."/>
            <person name="Roelandt R."/>
            <person name="Van Damme P."/>
            <person name="Gevaert K."/>
            <person name="Presland R.B."/>
            <person name="Takahara H."/>
            <person name="Puppels G."/>
            <person name="Caspers P."/>
            <person name="Vandenabeele P."/>
            <person name="Declercq W."/>
        </authorList>
    </citation>
    <scope>FUNCTION</scope>
    <scope>DISRUPTION PHENOTYPE</scope>
</reference>
<reference key="9">
    <citation type="journal article" date="2014" name="J. Biol. Chem.">
        <title>Mesotrypsin and caspase-14 participate in prosaposin processing: potential relevance to epidermal permeability barrier formation.</title>
        <authorList>
            <person name="Yamamoto-Tanaka M."/>
            <person name="Motoyama A."/>
            <person name="Miyai M."/>
            <person name="Matsunaga Y."/>
            <person name="Matsuda J."/>
            <person name="Tsuboi R."/>
            <person name="Hibino T."/>
        </authorList>
    </citation>
    <scope>FUNCTION</scope>
</reference>
<evidence type="ECO:0000250" key="1">
    <source>
        <dbReference type="UniProtKB" id="P29466"/>
    </source>
</evidence>
<evidence type="ECO:0000250" key="2">
    <source>
        <dbReference type="UniProtKB" id="P31944"/>
    </source>
</evidence>
<evidence type="ECO:0000269" key="3">
    <source>
    </source>
</evidence>
<evidence type="ECO:0000269" key="4">
    <source>
    </source>
</evidence>
<evidence type="ECO:0000269" key="5">
    <source>
    </source>
</evidence>
<evidence type="ECO:0000269" key="6">
    <source>
    </source>
</evidence>
<evidence type="ECO:0000269" key="7">
    <source>
    </source>
</evidence>
<evidence type="ECO:0000269" key="8">
    <source>
    </source>
</evidence>
<evidence type="ECO:0000269" key="9">
    <source>
    </source>
</evidence>
<evidence type="ECO:0000269" key="10">
    <source>
    </source>
</evidence>
<evidence type="ECO:0000305" key="11"/>
<evidence type="ECO:0000305" key="12">
    <source>
    </source>
</evidence>
<keyword id="KW-0025">Alternative splicing</keyword>
<keyword id="KW-0963">Cytoplasm</keyword>
<keyword id="KW-0221">Differentiation</keyword>
<keyword id="KW-0378">Hydrolase</keyword>
<keyword id="KW-0539">Nucleus</keyword>
<keyword id="KW-0645">Protease</keyword>
<keyword id="KW-1185">Reference proteome</keyword>
<keyword id="KW-0788">Thiol protease</keyword>
<keyword id="KW-0865">Zymogen</keyword>
<name>CASPE_MOUSE</name>
<sequence length="257" mass="29458">MESEMSDPQPLQEERYDMSGARLALTLCVTKAREGSEVDMEALERMFRYLKFESTMKRDPTAQQFLEELDEFQQTIDNWEEPVSCAFVVLMAHGEEGLLKGEDEKMVRLEDLFEVLNNKNCKALRGKPKVYIIQACRGEHRDPGEELRGNEELGGDEELGGDEVAVLKNNPQSIPTYTDTLHIYSTVEGYLSYRHDEKGSGFIQTLTDVFIHKKGSILELTEEITRLMANTEVMQEGKPRKVNPEVQSTLRKKLYLQ</sequence>